<proteinExistence type="inferred from homology"/>
<reference key="1">
    <citation type="journal article" date="1995" name="Gen. Comp. Endocrinol.">
        <title>Isolation and characterization of a cDNA encoding for preprosomatostatin containing [Tyr7, Gly10]-somatostatin-14 from the endocrine pancreas of rainbow trout, Oncorhynchus mykiss.</title>
        <authorList>
            <person name="Moore C.A."/>
            <person name="Kittilson J.D."/>
            <person name="Dahl S.K."/>
            <person name="Sheridan M.A."/>
        </authorList>
    </citation>
    <scope>NUCLEOTIDE SEQUENCE [MRNA]</scope>
</reference>
<dbReference type="EMBL" id="U32471">
    <property type="protein sequence ID" value="AAC59695.1"/>
    <property type="molecule type" value="mRNA"/>
</dbReference>
<dbReference type="PIR" id="I51064">
    <property type="entry name" value="I51064"/>
</dbReference>
<dbReference type="RefSeq" id="NP_001118175.1">
    <property type="nucleotide sequence ID" value="NM_001124703.1"/>
</dbReference>
<dbReference type="GeneID" id="100136751"/>
<dbReference type="KEGG" id="omy:100136751"/>
<dbReference type="OrthoDB" id="9948948at2759"/>
<dbReference type="Proteomes" id="UP000694395">
    <property type="component" value="Unplaced"/>
</dbReference>
<dbReference type="GO" id="GO:0005615">
    <property type="term" value="C:extracellular space"/>
    <property type="evidence" value="ECO:0007669"/>
    <property type="project" value="TreeGrafter"/>
</dbReference>
<dbReference type="GO" id="GO:0005179">
    <property type="term" value="F:hormone activity"/>
    <property type="evidence" value="ECO:0007669"/>
    <property type="project" value="UniProtKB-KW"/>
</dbReference>
<dbReference type="GO" id="GO:0030334">
    <property type="term" value="P:regulation of cell migration"/>
    <property type="evidence" value="ECO:0007669"/>
    <property type="project" value="TreeGrafter"/>
</dbReference>
<dbReference type="InterPro" id="IPR004250">
    <property type="entry name" value="Somatostatin"/>
</dbReference>
<dbReference type="InterPro" id="IPR018142">
    <property type="entry name" value="Somatostatin/Cortistatin_C"/>
</dbReference>
<dbReference type="PANTHER" id="PTHR10558">
    <property type="entry name" value="SOMATOSTATIN"/>
    <property type="match status" value="1"/>
</dbReference>
<dbReference type="PANTHER" id="PTHR10558:SF6">
    <property type="entry name" value="SOMATOSTATIN 1, TANDEM DUPLICATE 2"/>
    <property type="match status" value="1"/>
</dbReference>
<dbReference type="Pfam" id="PF03002">
    <property type="entry name" value="Somatostatin"/>
    <property type="match status" value="1"/>
</dbReference>
<dbReference type="PIRSF" id="PIRSF001814">
    <property type="entry name" value="Somatostatin"/>
    <property type="match status" value="1"/>
</dbReference>
<protein>
    <recommendedName>
        <fullName>Somatostatin-2</fullName>
    </recommendedName>
    <alternativeName>
        <fullName>Somatostatin II</fullName>
    </alternativeName>
    <component>
        <recommendedName>
            <fullName>[Tyr21,Gly24]-somatostatin-28</fullName>
        </recommendedName>
    </component>
    <component>
        <recommendedName>
            <fullName>[Tyr7,Gly10]-somatostatin-14</fullName>
        </recommendedName>
    </component>
</protein>
<feature type="signal peptide" evidence="2">
    <location>
        <begin position="1"/>
        <end position="18"/>
    </location>
</feature>
<feature type="propeptide" id="PRO_0000033139" evidence="2">
    <location>
        <begin position="19"/>
        <end position="87"/>
    </location>
</feature>
<feature type="peptide" id="PRO_0000033140" description="[Tyr21,Gly24]-somatostatin-28" evidence="2">
    <location>
        <begin position="88"/>
        <end position="115"/>
    </location>
</feature>
<feature type="peptide" id="PRO_0000033141" description="[Tyr7,Gly10]-somatostatin-14">
    <location>
        <begin position="102"/>
        <end position="115"/>
    </location>
</feature>
<feature type="disulfide bond" evidence="1">
    <location>
        <begin position="104"/>
        <end position="115"/>
    </location>
</feature>
<evidence type="ECO:0000250" key="1"/>
<evidence type="ECO:0000255" key="2"/>
<evidence type="ECO:0000305" key="3"/>
<comment type="function">
    <text>Somatostatin inhibits the release of somatotropin.</text>
</comment>
<comment type="subcellular location">
    <subcellularLocation>
        <location>Secreted</location>
    </subcellularLocation>
</comment>
<comment type="similarity">
    <text evidence="3">Belongs to the somatostatin family.</text>
</comment>
<gene>
    <name type="primary">sst2</name>
</gene>
<keyword id="KW-0165">Cleavage on pair of basic residues</keyword>
<keyword id="KW-1015">Disulfide bond</keyword>
<keyword id="KW-0372">Hormone</keyword>
<keyword id="KW-0964">Secreted</keyword>
<keyword id="KW-0732">Signal</keyword>
<sequence>MKVCRIHCALALLGLALAICSQGAASQPDLDLRSRRLLQRARAAAWPHRSGVSERWRTFYPNCPCLRPRKVKCPAGAKEDLRVELERSVGNPNNLPPRERKAGCKNFYWKGFTSC</sequence>
<accession>Q91194</accession>
<organism>
    <name type="scientific">Oncorhynchus mykiss</name>
    <name type="common">Rainbow trout</name>
    <name type="synonym">Salmo gairdneri</name>
    <dbReference type="NCBI Taxonomy" id="8022"/>
    <lineage>
        <taxon>Eukaryota</taxon>
        <taxon>Metazoa</taxon>
        <taxon>Chordata</taxon>
        <taxon>Craniata</taxon>
        <taxon>Vertebrata</taxon>
        <taxon>Euteleostomi</taxon>
        <taxon>Actinopterygii</taxon>
        <taxon>Neopterygii</taxon>
        <taxon>Teleostei</taxon>
        <taxon>Protacanthopterygii</taxon>
        <taxon>Salmoniformes</taxon>
        <taxon>Salmonidae</taxon>
        <taxon>Salmoninae</taxon>
        <taxon>Oncorhynchus</taxon>
    </lineage>
</organism>
<name>SMS2_ONCMY</name>